<comment type="function">
    <text evidence="2">Positively regulates reproductive function by facilitating male gametophyte formation and double fertilization.</text>
</comment>
<comment type="tissue specificity">
    <text evidence="2">Mostly expressed in pollen and open flowers and, to a lower extent, in closed flowers.</text>
</comment>
<comment type="developmental stage">
    <text evidence="2">During male gametophyte development, first observed in bicellular pollen, and accumulates gradually during pollen maturation in tricellular pollen and mature pollen.</text>
</comment>
<comment type="disruption phenotype">
    <text evidence="2">Altered male gametophytic development with frequent single-fertilization events leading to reduced seed set due to undeveloped ovules. Increased levels of ARI14 in sperm.</text>
</comment>
<comment type="miscellaneous">
    <text evidence="2">Transcripts of KPL and ARI14, encoded by adjacent genes organized in a reverse orientation, have the potential to generate natural cis-antisense siRNAs (cis-nat-siRNAs) pair targeting ARI14 in sperm, thus leading to opposite expression levels during male gametophyte development.</text>
</comment>
<protein>
    <recommendedName>
        <fullName evidence="3">Protein KOKOPELLI</fullName>
    </recommendedName>
</protein>
<organism>
    <name type="scientific">Arabidopsis thaliana</name>
    <name type="common">Mouse-ear cress</name>
    <dbReference type="NCBI Taxonomy" id="3702"/>
    <lineage>
        <taxon>Eukaryota</taxon>
        <taxon>Viridiplantae</taxon>
        <taxon>Streptophyta</taxon>
        <taxon>Embryophyta</taxon>
        <taxon>Tracheophyta</taxon>
        <taxon>Spermatophyta</taxon>
        <taxon>Magnoliopsida</taxon>
        <taxon>eudicotyledons</taxon>
        <taxon>Gunneridae</taxon>
        <taxon>Pentapetalae</taxon>
        <taxon>rosids</taxon>
        <taxon>malvids</taxon>
        <taxon>Brassicales</taxon>
        <taxon>Brassicaceae</taxon>
        <taxon>Camelineae</taxon>
        <taxon>Arabidopsis</taxon>
    </lineage>
</organism>
<accession>Q9FFP2</accession>
<accession>Q5BPF0</accession>
<dbReference type="EMBL" id="AB005234">
    <property type="protein sequence ID" value="BAB10465.1"/>
    <property type="molecule type" value="Genomic_DNA"/>
</dbReference>
<dbReference type="EMBL" id="CP002688">
    <property type="protein sequence ID" value="AED97789.1"/>
    <property type="molecule type" value="Genomic_DNA"/>
</dbReference>
<dbReference type="EMBL" id="AY924878">
    <property type="protein sequence ID" value="AAX23953.1"/>
    <property type="molecule type" value="Genomic_DNA"/>
</dbReference>
<dbReference type="RefSeq" id="NP_201177.1">
    <property type="nucleotide sequence ID" value="NM_125767.2"/>
</dbReference>
<dbReference type="SMR" id="Q9FFP2"/>
<dbReference type="STRING" id="3702.Q9FFP2"/>
<dbReference type="PaxDb" id="3702-AT5G63720.1"/>
<dbReference type="EnsemblPlants" id="AT5G63720.1">
    <property type="protein sequence ID" value="AT5G63720.1"/>
    <property type="gene ID" value="AT5G63720"/>
</dbReference>
<dbReference type="GeneID" id="836492"/>
<dbReference type="Gramene" id="AT5G63720.1">
    <property type="protein sequence ID" value="AT5G63720.1"/>
    <property type="gene ID" value="AT5G63720"/>
</dbReference>
<dbReference type="KEGG" id="ath:AT5G63720"/>
<dbReference type="Araport" id="AT5G63720"/>
<dbReference type="TAIR" id="AT5G63720">
    <property type="gene designation" value="KPL"/>
</dbReference>
<dbReference type="eggNOG" id="ENOG502S0F7">
    <property type="taxonomic scope" value="Eukaryota"/>
</dbReference>
<dbReference type="HOGENOM" id="CLU_587100_0_0_1"/>
<dbReference type="InParanoid" id="Q9FFP2"/>
<dbReference type="OMA" id="HHESKEQ"/>
<dbReference type="OrthoDB" id="1296610at2759"/>
<dbReference type="PRO" id="PR:Q9FFP2"/>
<dbReference type="Proteomes" id="UP000006548">
    <property type="component" value="Chromosome 5"/>
</dbReference>
<dbReference type="ExpressionAtlas" id="Q9FFP2">
    <property type="expression patterns" value="baseline and differential"/>
</dbReference>
<dbReference type="GO" id="GO:0009567">
    <property type="term" value="P:double fertilization forming a zygote and endosperm"/>
    <property type="evidence" value="ECO:0000315"/>
    <property type="project" value="TAIR"/>
</dbReference>
<dbReference type="GO" id="GO:0009555">
    <property type="term" value="P:pollen development"/>
    <property type="evidence" value="ECO:0000315"/>
    <property type="project" value="TAIR"/>
</dbReference>
<reference key="1">
    <citation type="journal article" date="1997" name="DNA Res.">
        <title>Structural analysis of Arabidopsis thaliana chromosome 5. I. Sequence features of the 1.6 Mb regions covered by twenty physically assigned P1 clones.</title>
        <authorList>
            <person name="Sato S."/>
            <person name="Kotani H."/>
            <person name="Nakamura Y."/>
            <person name="Kaneko T."/>
            <person name="Asamizu E."/>
            <person name="Fukami M."/>
            <person name="Miyajima N."/>
            <person name="Tabata S."/>
        </authorList>
    </citation>
    <scope>NUCLEOTIDE SEQUENCE [LARGE SCALE GENOMIC DNA]</scope>
    <source>
        <strain>cv. Columbia</strain>
    </source>
</reference>
<reference key="2">
    <citation type="journal article" date="2017" name="Plant J.">
        <title>Araport11: a complete reannotation of the Arabidopsis thaliana reference genome.</title>
        <authorList>
            <person name="Cheng C.Y."/>
            <person name="Krishnakumar V."/>
            <person name="Chan A.P."/>
            <person name="Thibaud-Nissen F."/>
            <person name="Schobel S."/>
            <person name="Town C.D."/>
        </authorList>
    </citation>
    <scope>GENOME REANNOTATION</scope>
    <source>
        <strain>cv. Columbia</strain>
    </source>
</reference>
<reference key="3">
    <citation type="submission" date="2005-02" db="EMBL/GenBank/DDBJ databases">
        <authorList>
            <person name="Underwood B.A."/>
            <person name="Xiao Y.-L."/>
            <person name="Moskal W.A. Jr."/>
            <person name="Monaghan E.L."/>
            <person name="Wang W."/>
            <person name="Redman J.C."/>
            <person name="Wu H.C."/>
            <person name="Utterback T."/>
            <person name="Town C.D."/>
        </authorList>
    </citation>
    <scope>NUCLEOTIDE SEQUENCE [LARGE SCALE GENOMIC DNA] OF 246-492</scope>
    <source>
        <strain>cv. Columbia</strain>
    </source>
</reference>
<reference key="4">
    <citation type="journal article" date="2010" name="Genes Dev.">
        <title>Proper regulation of a sperm-specific cis-nat-siRNA is essential for double fertilization in Arabidopsis.</title>
        <authorList>
            <person name="Ron M."/>
            <person name="Alandete Saez M."/>
            <person name="Eshed Williams L."/>
            <person name="Fletcher J.C."/>
            <person name="McCormick S."/>
        </authorList>
    </citation>
    <scope>FUNCTION</scope>
    <scope>DISRUPTION PHENOTYPE</scope>
    <scope>TISSUE SPECIFICITY</scope>
    <scope>DEVELOPMENTAL STAGE</scope>
    <source>
        <strain>cv. Landsberg erecta</strain>
        <strain>cv. Wassilewskija-4</strain>
    </source>
</reference>
<name>KPL_ARATH</name>
<feature type="chain" id="PRO_0000439863" description="Protein KOKOPELLI">
    <location>
        <begin position="1"/>
        <end position="492"/>
    </location>
</feature>
<feature type="region of interest" description="Disordered" evidence="1">
    <location>
        <begin position="218"/>
        <end position="354"/>
    </location>
</feature>
<feature type="region of interest" description="Disordered" evidence="1">
    <location>
        <begin position="394"/>
        <end position="426"/>
    </location>
</feature>
<feature type="compositionally biased region" description="Acidic residues" evidence="1">
    <location>
        <begin position="256"/>
        <end position="270"/>
    </location>
</feature>
<feature type="compositionally biased region" description="Low complexity" evidence="1">
    <location>
        <begin position="287"/>
        <end position="305"/>
    </location>
</feature>
<feature type="compositionally biased region" description="Polar residues" evidence="1">
    <location>
        <begin position="317"/>
        <end position="336"/>
    </location>
</feature>
<feature type="compositionally biased region" description="Basic and acidic residues" evidence="1">
    <location>
        <begin position="337"/>
        <end position="348"/>
    </location>
</feature>
<feature type="compositionally biased region" description="Basic and acidic residues" evidence="1">
    <location>
        <begin position="403"/>
        <end position="412"/>
    </location>
</feature>
<gene>
    <name evidence="3" type="primary">KPL</name>
    <name evidence="4" type="ordered locus">At5g63720</name>
    <name evidence="5" type="ORF">MBK5.20</name>
</gene>
<sequence>MEPNNVERNLQSLRRLYSLLVANARNEYIPEAYKLDDNTQFLLKRLLDFASHEHFVTQSNLLATQLRVFPKTVLHGAKPSNVADSSETTPPAMLSQINGSHITRVSKPLEAKGTLQRDLRVDQIRSNPSKDVLTEEVVDAIEQIDTQLSALSFVSSRVDSDERTRSVKSFVTPPTEECRQNSQASMPCLRSNYMTVSQKSVISGAEVTFPYNDQLVRVTSPPQPLPPRAVSGFKKPNQSNRASQKMPIMKPTLMDQETETFDDDSSETEADQTPSATGSESEDEEVSTSQEYSGETGSSSGSEWETQAENDTESKSESSYPPQNDDSVSEVSTSPPHTDRDTSREPGKQRRNVMGRFKRIKNKIGQIFHHHHHHHHHHHHHDKEKPSAWNKLQSKFHHKHQEKSKERKRPMSESKGLTTHKQQHQGGHFHALVEGLVRHRKHSKKQKHQLKSDAKKTEWWKLLKKRQGGGVKIPKRGRVKLGKKKHYLSKNV</sequence>
<evidence type="ECO:0000256" key="1">
    <source>
        <dbReference type="SAM" id="MobiDB-lite"/>
    </source>
</evidence>
<evidence type="ECO:0000269" key="2">
    <source>
    </source>
</evidence>
<evidence type="ECO:0000303" key="3">
    <source>
    </source>
</evidence>
<evidence type="ECO:0000312" key="4">
    <source>
        <dbReference type="Araport" id="AT5G63720"/>
    </source>
</evidence>
<evidence type="ECO:0000312" key="5">
    <source>
        <dbReference type="EMBL" id="BAB10465.1"/>
    </source>
</evidence>
<keyword id="KW-0217">Developmental protein</keyword>
<keyword id="KW-0278">Fertilization</keyword>
<keyword id="KW-1185">Reference proteome</keyword>
<proteinExistence type="evidence at transcript level"/>